<gene>
    <name evidence="9" type="primary">RPP2B</name>
    <name type="synonym">L12EIA</name>
    <name type="synonym">RPL45</name>
    <name type="synonym">RPLA4</name>
    <name type="ordered locus">YDR382W</name>
</gene>
<evidence type="ECO:0000256" key="1">
    <source>
        <dbReference type="SAM" id="MobiDB-lite"/>
    </source>
</evidence>
<evidence type="ECO:0000269" key="2">
    <source>
    </source>
</evidence>
<evidence type="ECO:0000269" key="3">
    <source>
    </source>
</evidence>
<evidence type="ECO:0000269" key="4">
    <source>
    </source>
</evidence>
<evidence type="ECO:0000269" key="5">
    <source>
    </source>
</evidence>
<evidence type="ECO:0000269" key="6">
    <source>
    </source>
</evidence>
<evidence type="ECO:0000269" key="7">
    <source>
    </source>
</evidence>
<evidence type="ECO:0000303" key="8">
    <source>
    </source>
</evidence>
<evidence type="ECO:0000303" key="9">
    <source>
    </source>
</evidence>
<evidence type="ECO:0000305" key="10"/>
<evidence type="ECO:0000305" key="11">
    <source>
    </source>
</evidence>
<evidence type="ECO:0000305" key="12">
    <source>
    </source>
</evidence>
<evidence type="ECO:0000305" key="13">
    <source>
    </source>
</evidence>
<evidence type="ECO:0007744" key="14">
    <source>
    </source>
</evidence>
<evidence type="ECO:0007744" key="15">
    <source>
    </source>
</evidence>
<evidence type="ECO:0007744" key="16">
    <source>
    </source>
</evidence>
<evidence type="ECO:0007744" key="17">
    <source>
    </source>
</evidence>
<evidence type="ECO:0007744" key="18">
    <source>
    </source>
</evidence>
<keyword id="KW-0002">3D-structure</keyword>
<keyword id="KW-0963">Cytoplasm</keyword>
<keyword id="KW-0903">Direct protein sequencing</keyword>
<keyword id="KW-1017">Isopeptide bond</keyword>
<keyword id="KW-0597">Phosphoprotein</keyword>
<keyword id="KW-1185">Reference proteome</keyword>
<keyword id="KW-0687">Ribonucleoprotein</keyword>
<keyword id="KW-0689">Ribosomal protein</keyword>
<keyword id="KW-0832">Ubl conjugation</keyword>
<proteinExistence type="evidence at protein level"/>
<accession>P02400</accession>
<accession>D6VT16</accession>
<reference key="1">
    <citation type="journal article" date="1988" name="J. Biol. Chem.">
        <title>Independent genes coding for three acidic proteins of the large ribosomal subunit from Saccharomyces cerevisiae.</title>
        <authorList>
            <person name="Remacha M."/>
            <person name="Saenz-Robles M.T."/>
            <person name="Vilella M.D."/>
            <person name="Ballesta J.P.G."/>
        </authorList>
    </citation>
    <scope>NUCLEOTIDE SEQUENCE [GENOMIC DNA]</scope>
</reference>
<reference key="2">
    <citation type="journal article" date="1990" name="J. Bacteriol.">
        <title>A family of genes encode the multiple forms of the Saccharomyces cerevisiae ribosomal proteins equivalent to the Escherichia coli L12 protein and a single form of the L10-equivalent ribosomal protein.</title>
        <authorList>
            <person name="Newton C.H."/>
            <person name="Shimmin L.C."/>
            <person name="Yee J."/>
            <person name="Dennis P.P."/>
        </authorList>
    </citation>
    <scope>NUCLEOTIDE SEQUENCE [GENOMIC DNA]</scope>
    <source>
        <strain>SR26-12C</strain>
    </source>
</reference>
<reference key="3">
    <citation type="journal article" date="1997" name="Nature">
        <title>The nucleotide sequence of Saccharomyces cerevisiae chromosome IV.</title>
        <authorList>
            <person name="Jacq C."/>
            <person name="Alt-Moerbe J."/>
            <person name="Andre B."/>
            <person name="Arnold W."/>
            <person name="Bahr A."/>
            <person name="Ballesta J.P.G."/>
            <person name="Bargues M."/>
            <person name="Baron L."/>
            <person name="Becker A."/>
            <person name="Biteau N."/>
            <person name="Bloecker H."/>
            <person name="Blugeon C."/>
            <person name="Boskovic J."/>
            <person name="Brandt P."/>
            <person name="Brueckner M."/>
            <person name="Buitrago M.J."/>
            <person name="Coster F."/>
            <person name="Delaveau T."/>
            <person name="del Rey F."/>
            <person name="Dujon B."/>
            <person name="Eide L.G."/>
            <person name="Garcia-Cantalejo J.M."/>
            <person name="Goffeau A."/>
            <person name="Gomez-Peris A."/>
            <person name="Granotier C."/>
            <person name="Hanemann V."/>
            <person name="Hankeln T."/>
            <person name="Hoheisel J.D."/>
            <person name="Jaeger W."/>
            <person name="Jimenez A."/>
            <person name="Jonniaux J.-L."/>
            <person name="Kraemer C."/>
            <person name="Kuester H."/>
            <person name="Laamanen P."/>
            <person name="Legros Y."/>
            <person name="Louis E.J."/>
            <person name="Moeller-Rieker S."/>
            <person name="Monnet A."/>
            <person name="Moro M."/>
            <person name="Mueller-Auer S."/>
            <person name="Nussbaumer B."/>
            <person name="Paricio N."/>
            <person name="Paulin L."/>
            <person name="Perea J."/>
            <person name="Perez-Alonso M."/>
            <person name="Perez-Ortin J.E."/>
            <person name="Pohl T.M."/>
            <person name="Prydz H."/>
            <person name="Purnelle B."/>
            <person name="Rasmussen S.W."/>
            <person name="Remacha M.A."/>
            <person name="Revuelta J.L."/>
            <person name="Rieger M."/>
            <person name="Salom D."/>
            <person name="Saluz H.P."/>
            <person name="Saiz J.E."/>
            <person name="Saren A.-M."/>
            <person name="Schaefer M."/>
            <person name="Scharfe M."/>
            <person name="Schmidt E.R."/>
            <person name="Schneider C."/>
            <person name="Scholler P."/>
            <person name="Schwarz S."/>
            <person name="Soler-Mira A."/>
            <person name="Urrestarazu L.A."/>
            <person name="Verhasselt P."/>
            <person name="Vissers S."/>
            <person name="Voet M."/>
            <person name="Volckaert G."/>
            <person name="Wagner G."/>
            <person name="Wambutt R."/>
            <person name="Wedler E."/>
            <person name="Wedler H."/>
            <person name="Woelfl S."/>
            <person name="Harris D.E."/>
            <person name="Bowman S."/>
            <person name="Brown D."/>
            <person name="Churcher C.M."/>
            <person name="Connor R."/>
            <person name="Dedman K."/>
            <person name="Gentles S."/>
            <person name="Hamlin N."/>
            <person name="Hunt S."/>
            <person name="Jones L."/>
            <person name="McDonald S."/>
            <person name="Murphy L.D."/>
            <person name="Niblett D."/>
            <person name="Odell C."/>
            <person name="Oliver K."/>
            <person name="Rajandream M.A."/>
            <person name="Richards C."/>
            <person name="Shore L."/>
            <person name="Walsh S.V."/>
            <person name="Barrell B.G."/>
            <person name="Dietrich F.S."/>
            <person name="Mulligan J.T."/>
            <person name="Allen E."/>
            <person name="Araujo R."/>
            <person name="Aviles E."/>
            <person name="Berno A."/>
            <person name="Carpenter J."/>
            <person name="Chen E."/>
            <person name="Cherry J.M."/>
            <person name="Chung E."/>
            <person name="Duncan M."/>
            <person name="Hunicke-Smith S."/>
            <person name="Hyman R.W."/>
            <person name="Komp C."/>
            <person name="Lashkari D."/>
            <person name="Lew H."/>
            <person name="Lin D."/>
            <person name="Mosedale D."/>
            <person name="Nakahara K."/>
            <person name="Namath A."/>
            <person name="Oefner P."/>
            <person name="Oh C."/>
            <person name="Petel F.X."/>
            <person name="Roberts D."/>
            <person name="Schramm S."/>
            <person name="Schroeder M."/>
            <person name="Shogren T."/>
            <person name="Shroff N."/>
            <person name="Winant A."/>
            <person name="Yelton M.A."/>
            <person name="Botstein D."/>
            <person name="Davis R.W."/>
            <person name="Johnston M."/>
            <person name="Andrews S."/>
            <person name="Brinkman R."/>
            <person name="Cooper J."/>
            <person name="Ding H."/>
            <person name="Du Z."/>
            <person name="Favello A."/>
            <person name="Fulton L."/>
            <person name="Gattung S."/>
            <person name="Greco T."/>
            <person name="Hallsworth K."/>
            <person name="Hawkins J."/>
            <person name="Hillier L.W."/>
            <person name="Jier M."/>
            <person name="Johnson D."/>
            <person name="Johnston L."/>
            <person name="Kirsten J."/>
            <person name="Kucaba T."/>
            <person name="Langston Y."/>
            <person name="Latreille P."/>
            <person name="Le T."/>
            <person name="Mardis E."/>
            <person name="Menezes S."/>
            <person name="Miller N."/>
            <person name="Nhan M."/>
            <person name="Pauley A."/>
            <person name="Peluso D."/>
            <person name="Rifkin L."/>
            <person name="Riles L."/>
            <person name="Taich A."/>
            <person name="Trevaskis E."/>
            <person name="Vignati D."/>
            <person name="Wilcox L."/>
            <person name="Wohldman P."/>
            <person name="Vaudin M."/>
            <person name="Wilson R."/>
            <person name="Waterston R."/>
            <person name="Albermann K."/>
            <person name="Hani J."/>
            <person name="Heumann K."/>
            <person name="Kleine K."/>
            <person name="Mewes H.-W."/>
            <person name="Zollner A."/>
            <person name="Zaccaria P."/>
        </authorList>
    </citation>
    <scope>NUCLEOTIDE SEQUENCE [LARGE SCALE GENOMIC DNA]</scope>
    <source>
        <strain>ATCC 204508 / S288c</strain>
    </source>
</reference>
<reference key="4">
    <citation type="journal article" date="2014" name="G3 (Bethesda)">
        <title>The reference genome sequence of Saccharomyces cerevisiae: Then and now.</title>
        <authorList>
            <person name="Engel S.R."/>
            <person name="Dietrich F.S."/>
            <person name="Fisk D.G."/>
            <person name="Binkley G."/>
            <person name="Balakrishnan R."/>
            <person name="Costanzo M.C."/>
            <person name="Dwight S.S."/>
            <person name="Hitz B.C."/>
            <person name="Karra K."/>
            <person name="Nash R.S."/>
            <person name="Weng S."/>
            <person name="Wong E.D."/>
            <person name="Lloyd P."/>
            <person name="Skrzypek M.S."/>
            <person name="Miyasato S.R."/>
            <person name="Simison M."/>
            <person name="Cherry J.M."/>
        </authorList>
    </citation>
    <scope>GENOME REANNOTATION</scope>
    <source>
        <strain>ATCC 204508 / S288c</strain>
    </source>
</reference>
<reference key="5">
    <citation type="journal article" date="1981" name="Biochim. Biophys. Acta">
        <title>Primary structure of an acidic ribosomal protein YPA1 from Saccharomyces cerevisiae. Isolation and characterization of peptides and the complete amino acid sequence.</title>
        <authorList>
            <person name="Itoh T."/>
        </authorList>
    </citation>
    <scope>PROTEIN SEQUENCE</scope>
</reference>
<reference key="6">
    <citation type="journal article" date="1993" name="Biochemistry">
        <title>The acidic phosphoproteins from Saccharomyces cerevisiae ribosomes. NH2-terminal acetylation is a conserved difference between P1 and P2 proteins.</title>
        <authorList>
            <person name="Santos C."/>
            <person name="Ortiz-Reyes B."/>
            <person name="Naranda T."/>
            <person name="Remacha M."/>
            <person name="Ballesta J.P.G."/>
        </authorList>
    </citation>
    <scope>PROTEIN SEQUENCE OF 1-6</scope>
</reference>
<reference key="7">
    <citation type="journal article" date="1998" name="Yeast">
        <title>The list of cytoplasmic ribosomal proteins of Saccharomyces cerevisiae.</title>
        <authorList>
            <person name="Planta R.J."/>
            <person name="Mager W.H."/>
        </authorList>
    </citation>
    <scope>NOMENCLATURE</scope>
    <scope>SUBUNIT</scope>
</reference>
<reference key="8">
    <citation type="journal article" date="1999" name="J. Biol. Chem.">
        <title>The action of N-terminal acetyltransferases on yeast ribosomal proteins.</title>
        <authorList>
            <person name="Arnold R.J."/>
            <person name="Polevoda B."/>
            <person name="Reilly J.P."/>
            <person name="Sherman F."/>
        </authorList>
    </citation>
    <scope>ANALYSIS OF N-TERMINUS</scope>
</reference>
<reference key="9">
    <citation type="journal article" date="2001" name="J. Biol. Chem.">
        <title>Asymmetric interactions between the acidic P1 and P2 proteins in the Saccharomyces cerevisiae ribosomal stalk.</title>
        <authorList>
            <person name="Guarinos E."/>
            <person name="Remacha M."/>
            <person name="Ballesta J.P.G."/>
        </authorList>
    </citation>
    <scope>INTERACTION WITH RPP1A</scope>
</reference>
<reference key="10">
    <citation type="journal article" date="2003" name="Nature">
        <title>Global analysis of protein localization in budding yeast.</title>
        <authorList>
            <person name="Huh W.-K."/>
            <person name="Falvo J.V."/>
            <person name="Gerke L.C."/>
            <person name="Carroll A.S."/>
            <person name="Howson R.W."/>
            <person name="Weissman J.S."/>
            <person name="O'Shea E.K."/>
        </authorList>
    </citation>
    <scope>SUBCELLULAR LOCATION [LARGE SCALE ANALYSIS]</scope>
</reference>
<reference key="11">
    <citation type="journal article" date="2003" name="Nature">
        <title>Global analysis of protein expression in yeast.</title>
        <authorList>
            <person name="Ghaemmaghami S."/>
            <person name="Huh W.-K."/>
            <person name="Bower K."/>
            <person name="Howson R.W."/>
            <person name="Belle A."/>
            <person name="Dephoure N."/>
            <person name="O'Shea E.K."/>
            <person name="Weissman J.S."/>
        </authorList>
    </citation>
    <scope>LEVEL OF PROTEIN EXPRESSION [LARGE SCALE ANALYSIS]</scope>
</reference>
<reference key="12">
    <citation type="journal article" date="2006" name="Mol. Microbiol.">
        <title>Yeast ribosomal P0 protein has two separate binding sites for P1/P2 proteins.</title>
        <authorList>
            <person name="Krokowski D."/>
            <person name="Boguszewska A."/>
            <person name="Abramczyk D."/>
            <person name="Liljas A."/>
            <person name="Tchorzewski M."/>
            <person name="Grankowski N."/>
        </authorList>
    </citation>
    <scope>INTERACTION WITH RPP0 AND RPP1A</scope>
</reference>
<reference key="13">
    <citation type="journal article" date="2007" name="J. Proteome Res.">
        <title>Large-scale phosphorylation analysis of alpha-factor-arrested Saccharomyces cerevisiae.</title>
        <authorList>
            <person name="Li X."/>
            <person name="Gerber S.A."/>
            <person name="Rudner A.D."/>
            <person name="Beausoleil S.A."/>
            <person name="Haas W."/>
            <person name="Villen J."/>
            <person name="Elias J.E."/>
            <person name="Gygi S.P."/>
        </authorList>
    </citation>
    <scope>PHOSPHORYLATION [LARGE SCALE ANALYSIS] AT SER-100</scope>
    <scope>IDENTIFICATION BY MASS SPECTROMETRY [LARGE SCALE ANALYSIS]</scope>
    <source>
        <strain>ADR376</strain>
    </source>
</reference>
<reference key="14">
    <citation type="journal article" date="2007" name="Proc. Natl. Acad. Sci. U.S.A.">
        <title>Analysis of phosphorylation sites on proteins from Saccharomyces cerevisiae by electron transfer dissociation (ETD) mass spectrometry.</title>
        <authorList>
            <person name="Chi A."/>
            <person name="Huttenhower C."/>
            <person name="Geer L.Y."/>
            <person name="Coon J.J."/>
            <person name="Syka J.E.P."/>
            <person name="Bai D.L."/>
            <person name="Shabanowitz J."/>
            <person name="Burke D.J."/>
            <person name="Troyanskaya O.G."/>
            <person name="Hunt D.F."/>
        </authorList>
    </citation>
    <scope>PHOSPHORYLATION [LARGE SCALE ANALYSIS] AT SER-29</scope>
    <scope>IDENTIFICATION BY MASS SPECTROMETRY [LARGE SCALE ANALYSIS]</scope>
</reference>
<reference key="15">
    <citation type="journal article" date="2008" name="Mol. Cell. Proteomics">
        <title>A multidimensional chromatography technology for in-depth phosphoproteome analysis.</title>
        <authorList>
            <person name="Albuquerque C.P."/>
            <person name="Smolka M.B."/>
            <person name="Payne S.H."/>
            <person name="Bafna V."/>
            <person name="Eng J."/>
            <person name="Zhou H."/>
        </authorList>
    </citation>
    <scope>PHOSPHORYLATION [LARGE SCALE ANALYSIS] AT SER-100</scope>
    <scope>IDENTIFICATION BY MASS SPECTROMETRY [LARGE SCALE ANALYSIS]</scope>
</reference>
<reference key="16">
    <citation type="journal article" date="2009" name="Science">
        <title>Global analysis of Cdk1 substrate phosphorylation sites provides insights into evolution.</title>
        <authorList>
            <person name="Holt L.J."/>
            <person name="Tuch B.B."/>
            <person name="Villen J."/>
            <person name="Johnson A.D."/>
            <person name="Gygi S.P."/>
            <person name="Morgan D.O."/>
        </authorList>
    </citation>
    <scope>PHOSPHORYLATION [LARGE SCALE ANALYSIS] AT SER-100</scope>
    <scope>IDENTIFICATION BY MASS SPECTROMETRY [LARGE SCALE ANALYSIS]</scope>
</reference>
<reference key="17">
    <citation type="journal article" date="2011" name="Science">
        <title>The structure of the eukaryotic ribosome at 3.0 A resolution.</title>
        <authorList>
            <person name="Ben-Shem A."/>
            <person name="Garreau de Loubresse N."/>
            <person name="Melnikov S."/>
            <person name="Jenner L."/>
            <person name="Yusupova G."/>
            <person name="Yusupov M."/>
        </authorList>
    </citation>
    <scope>SUBUNIT</scope>
    <scope>SUBCELLULAR LOCATION</scope>
</reference>
<reference key="18">
    <citation type="journal article" date="2012" name="Proteomics">
        <title>Sites of ubiquitin attachment in Saccharomyces cerevisiae.</title>
        <authorList>
            <person name="Starita L.M."/>
            <person name="Lo R.S."/>
            <person name="Eng J.K."/>
            <person name="von Haller P.D."/>
            <person name="Fields S."/>
        </authorList>
    </citation>
    <scope>UBIQUITINATION [LARGE SCALE ANALYSIS] AT LYS-49</scope>
    <scope>IDENTIFICATION BY MASS SPECTROMETRY [LARGE SCALE ANALYSIS]</scope>
</reference>
<reference key="19">
    <citation type="journal article" date="2014" name="Curr. Opin. Struct. Biol.">
        <title>A new system for naming ribosomal proteins.</title>
        <authorList>
            <person name="Ban N."/>
            <person name="Beckmann R."/>
            <person name="Cate J.H.D."/>
            <person name="Dinman J.D."/>
            <person name="Dragon F."/>
            <person name="Ellis S.R."/>
            <person name="Lafontaine D.L.J."/>
            <person name="Lindahl L."/>
            <person name="Liljas A."/>
            <person name="Lipton J.M."/>
            <person name="McAlear M.A."/>
            <person name="Moore P.B."/>
            <person name="Noller H.F."/>
            <person name="Ortega J."/>
            <person name="Panse V.G."/>
            <person name="Ramakrishnan V."/>
            <person name="Spahn C.M.T."/>
            <person name="Steitz T.A."/>
            <person name="Tchorzewski M."/>
            <person name="Tollervey D."/>
            <person name="Warren A.J."/>
            <person name="Williamson J.R."/>
            <person name="Wilson D."/>
            <person name="Yonath A."/>
            <person name="Yusupov M."/>
        </authorList>
    </citation>
    <scope>NOMENCLATURE</scope>
</reference>
<comment type="function">
    <text evidence="11">Component of the ribosome, a large ribonucleoprotein complex responsible for the synthesis of proteins in the cell. The small ribosomal subunit (SSU) binds messenger RNAs (mRNAs) and translates the encoded message by selecting cognate aminoacyl-transfer RNA (tRNA) molecules. The large subunit (LSU) contains the ribosomal catalytic site termed the peptidyl transferase center (PTC), which catalyzes the formation of peptide bonds, thereby polymerizing the amino acids delivered by tRNAs into a polypeptide chain. The nascent polypeptides leave the ribosome through a tunnel in the LSU and interact with protein factors that function in enzymatic processing, targeting, and the membrane insertion of nascent chains at the exit of the ribosomal tunnel.</text>
</comment>
<comment type="subunit">
    <text evidence="2 5 6 13">Component of the large ribosomal subunit (LSU). Mature yeast ribosomes consist of a small (40S) and a large (60S) subunit. The 40S small subunit contains 1 molecule of ribosomal RNA (18S rRNA) and 33 different proteins (encoded by 57 genes). The large 60S subunit contains 3 rRNA molecules (25S, 5.8S and 5S rRNA) and 46 different proteins (encoded by 81 genes) (PubMed:22096102, PubMed:9559554). The 5 acidic ribosomal P-proteins form the stalk structure of the 60S subunit. They are organized as a pentameric complex in which uL10/P0 interacts with 2 heterodimers, P1A-P2B and P1B-P2A (PubMed:11431471, PubMed:16573688).</text>
</comment>
<comment type="interaction">
    <interactant intactId="EBI-15464">
        <id>P02400</id>
    </interactant>
    <interactant intactId="EBI-15447">
        <id>P05317</id>
        <label>RPP0</label>
    </interactant>
    <organismsDiffer>false</organismsDiffer>
    <experiments>2</experiments>
</comment>
<comment type="interaction">
    <interactant intactId="EBI-15464">
        <id>P02400</id>
    </interactant>
    <interactant intactId="EBI-15452">
        <id>P05318</id>
        <label>RPP1A</label>
    </interactant>
    <organismsDiffer>false</organismsDiffer>
    <experiments>3</experiments>
</comment>
<comment type="interaction">
    <interactant intactId="EBI-15464">
        <id>P02400</id>
    </interactant>
    <interactant intactId="EBI-15456">
        <id>P05319</id>
        <label>RPP2A</label>
    </interactant>
    <organismsDiffer>false</organismsDiffer>
    <experiments>3</experiments>
</comment>
<comment type="subcellular location">
    <subcellularLocation>
        <location evidence="3 6">Cytoplasm</location>
    </subcellularLocation>
</comment>
<comment type="PTM">
    <text evidence="7">The N-terminus is not modified.</text>
</comment>
<comment type="miscellaneous">
    <text evidence="12">The 4 small acidic ribosomal P-proteins from yeast can be classified into two couples of similar but not identical sequences. Each couple (P1A/P1B and P2A/P2B) is distinctly related to one of the two acidic ribosomal P-proteins P1/P2 present in multicellular organisms.</text>
</comment>
<comment type="miscellaneous">
    <text evidence="4">Present with 602000 molecules/cell in log phase SD medium.</text>
</comment>
<comment type="similarity">
    <text evidence="10">Belongs to the eukaryotic ribosomal protein P1/P2 family.</text>
</comment>
<dbReference type="EMBL" id="J03761">
    <property type="protein sequence ID" value="AAA34972.1"/>
    <property type="molecule type" value="Genomic_DNA"/>
</dbReference>
<dbReference type="EMBL" id="M26505">
    <property type="protein sequence ID" value="AAA34732.1"/>
    <property type="molecule type" value="Genomic_DNA"/>
</dbReference>
<dbReference type="EMBL" id="U28373">
    <property type="protein sequence ID" value="AAB64818.1"/>
    <property type="molecule type" value="Genomic_DNA"/>
</dbReference>
<dbReference type="EMBL" id="U32274">
    <property type="protein sequence ID" value="AAB64824.1"/>
    <property type="molecule type" value="Genomic_DNA"/>
</dbReference>
<dbReference type="EMBL" id="BK006938">
    <property type="protein sequence ID" value="DAA12226.1"/>
    <property type="molecule type" value="Genomic_DNA"/>
</dbReference>
<dbReference type="PIR" id="A35109">
    <property type="entry name" value="R5BYA1"/>
</dbReference>
<dbReference type="RefSeq" id="NP_010670.3">
    <property type="nucleotide sequence ID" value="NM_001180690.3"/>
</dbReference>
<dbReference type="PDB" id="3N2D">
    <property type="method" value="X-ray"/>
    <property type="resolution" value="2.22 A"/>
    <property type="chains" value="B=100-105"/>
</dbReference>
<dbReference type="PDB" id="3N3X">
    <property type="method" value="X-ray"/>
    <property type="resolution" value="1.70 A"/>
    <property type="chains" value="B=100-105"/>
</dbReference>
<dbReference type="PDBsum" id="3N2D"/>
<dbReference type="PDBsum" id="3N3X"/>
<dbReference type="SMR" id="P02400"/>
<dbReference type="BioGRID" id="32443">
    <property type="interactions" value="499"/>
</dbReference>
<dbReference type="ComplexPortal" id="CPX-1601">
    <property type="entry name" value="60S cytosolic large ribosomal subunit"/>
</dbReference>
<dbReference type="DIP" id="DIP-580N"/>
<dbReference type="FunCoup" id="P02400">
    <property type="interactions" value="1231"/>
</dbReference>
<dbReference type="IntAct" id="P02400">
    <property type="interactions" value="130"/>
</dbReference>
<dbReference type="MINT" id="P02400"/>
<dbReference type="STRING" id="4932.YDR382W"/>
<dbReference type="iPTMnet" id="P02400"/>
<dbReference type="PaxDb" id="4932-YDR382W"/>
<dbReference type="PeptideAtlas" id="P02400"/>
<dbReference type="TopDownProteomics" id="P02400"/>
<dbReference type="EnsemblFungi" id="YDR382W_mRNA">
    <property type="protein sequence ID" value="YDR382W"/>
    <property type="gene ID" value="YDR382W"/>
</dbReference>
<dbReference type="GeneID" id="851990"/>
<dbReference type="KEGG" id="sce:YDR382W"/>
<dbReference type="AGR" id="SGD:S000002790"/>
<dbReference type="SGD" id="S000002790">
    <property type="gene designation" value="RPP2B"/>
</dbReference>
<dbReference type="VEuPathDB" id="FungiDB:YDR382W"/>
<dbReference type="eggNOG" id="KOG3449">
    <property type="taxonomic scope" value="Eukaryota"/>
</dbReference>
<dbReference type="GeneTree" id="ENSGT00940000176747"/>
<dbReference type="HOGENOM" id="CLU_114656_0_1_1"/>
<dbReference type="InParanoid" id="P02400"/>
<dbReference type="OMA" id="MKVIASY"/>
<dbReference type="OrthoDB" id="1227494at2759"/>
<dbReference type="BioCyc" id="YEAST:G3O-29930-MONOMER"/>
<dbReference type="BioGRID-ORCS" id="851990">
    <property type="hits" value="5 hits in 10 CRISPR screens"/>
</dbReference>
<dbReference type="ChiTaRS" id="RPP2B">
    <property type="organism name" value="yeast"/>
</dbReference>
<dbReference type="EvolutionaryTrace" id="P02400"/>
<dbReference type="PRO" id="PR:P02400"/>
<dbReference type="Proteomes" id="UP000002311">
    <property type="component" value="Chromosome IV"/>
</dbReference>
<dbReference type="RNAct" id="P02400">
    <property type="molecule type" value="protein"/>
</dbReference>
<dbReference type="GO" id="GO:0005829">
    <property type="term" value="C:cytosol"/>
    <property type="evidence" value="ECO:0000304"/>
    <property type="project" value="Reactome"/>
</dbReference>
<dbReference type="GO" id="GO:0022625">
    <property type="term" value="C:cytosolic large ribosomal subunit"/>
    <property type="evidence" value="ECO:0000314"/>
    <property type="project" value="SGD"/>
</dbReference>
<dbReference type="GO" id="GO:0000324">
    <property type="term" value="C:fungal-type vacuole"/>
    <property type="evidence" value="ECO:0007005"/>
    <property type="project" value="SGD"/>
</dbReference>
<dbReference type="GO" id="GO:0140678">
    <property type="term" value="F:molecular function inhibitor activity"/>
    <property type="evidence" value="ECO:0000269"/>
    <property type="project" value="DisProt"/>
</dbReference>
<dbReference type="GO" id="GO:0030295">
    <property type="term" value="F:protein kinase activator activity"/>
    <property type="evidence" value="ECO:0000314"/>
    <property type="project" value="SGD"/>
</dbReference>
<dbReference type="GO" id="GO:0003735">
    <property type="term" value="F:structural constituent of ribosome"/>
    <property type="evidence" value="ECO:0000314"/>
    <property type="project" value="SGD"/>
</dbReference>
<dbReference type="GO" id="GO:0002181">
    <property type="term" value="P:cytoplasmic translation"/>
    <property type="evidence" value="ECO:0000315"/>
    <property type="project" value="SGD"/>
</dbReference>
<dbReference type="GO" id="GO:0002182">
    <property type="term" value="P:cytoplasmic translational elongation"/>
    <property type="evidence" value="ECO:0007669"/>
    <property type="project" value="InterPro"/>
</dbReference>
<dbReference type="CDD" id="cd05833">
    <property type="entry name" value="Ribosomal_P2"/>
    <property type="match status" value="1"/>
</dbReference>
<dbReference type="FunFam" id="1.10.10.1410:FF:000002">
    <property type="entry name" value="60S acidic ribosomal protein P2"/>
    <property type="match status" value="1"/>
</dbReference>
<dbReference type="Gene3D" id="1.10.10.1410">
    <property type="match status" value="1"/>
</dbReference>
<dbReference type="HAMAP" id="MF_01478">
    <property type="entry name" value="Ribosomal_L12_arch"/>
    <property type="match status" value="1"/>
</dbReference>
<dbReference type="InterPro" id="IPR038716">
    <property type="entry name" value="P1/P2_N_sf"/>
</dbReference>
<dbReference type="InterPro" id="IPR027534">
    <property type="entry name" value="Ribosomal_P1/P2"/>
</dbReference>
<dbReference type="InterPro" id="IPR044076">
    <property type="entry name" value="Ribosomal_P2"/>
</dbReference>
<dbReference type="PANTHER" id="PTHR21141">
    <property type="entry name" value="60S ACIDIC RIBOSOMAL PROTEIN FAMILY MEMBER"/>
    <property type="match status" value="1"/>
</dbReference>
<dbReference type="PANTHER" id="PTHR21141:SF5">
    <property type="entry name" value="LARGE RIBOSOMAL SUBUNIT PROTEIN P2"/>
    <property type="match status" value="1"/>
</dbReference>
<dbReference type="Pfam" id="PF00428">
    <property type="entry name" value="Ribosomal_60s"/>
    <property type="match status" value="1"/>
</dbReference>
<feature type="chain" id="PRO_0000157682" description="Large ribosomal subunit protein P2B">
    <location>
        <begin position="1"/>
        <end position="110"/>
    </location>
</feature>
<feature type="region of interest" description="Disordered" evidence="1">
    <location>
        <begin position="66"/>
        <end position="110"/>
    </location>
</feature>
<feature type="compositionally biased region" description="Low complexity" evidence="1">
    <location>
        <begin position="69"/>
        <end position="86"/>
    </location>
</feature>
<feature type="compositionally biased region" description="Acidic residues" evidence="1">
    <location>
        <begin position="87"/>
        <end position="104"/>
    </location>
</feature>
<feature type="modified residue" description="Phosphoserine" evidence="14">
    <location>
        <position position="29"/>
    </location>
</feature>
<feature type="modified residue" description="Phosphoserine" evidence="15 16 17">
    <location>
        <position position="100"/>
    </location>
</feature>
<feature type="cross-link" description="Glycyl lysine isopeptide (Lys-Gly) (interchain with G-Cter in ubiquitin)" evidence="18">
    <location>
        <position position="49"/>
    </location>
</feature>
<feature type="sequence conflict" description="In Ref. 5; AA sequence." evidence="10" ref="5">
    <original>AAGA</original>
    <variation>GPAS</variation>
    <location>
        <begin position="75"/>
        <end position="78"/>
    </location>
</feature>
<feature type="sequence conflict" description="In Ref. 5; AA sequence." evidence="10" ref="5">
    <original>DA</original>
    <variation>GD</variation>
    <location>
        <begin position="86"/>
        <end position="87"/>
    </location>
</feature>
<feature type="sequence conflict" description="In Ref. 5; AA sequence." evidence="10" ref="5">
    <original>E</original>
    <variation>A</variation>
    <location>
        <position position="89"/>
    </location>
</feature>
<sequence>MKYLAAYLLLVQGGNAAPSAADIKAVVESVGAEVDEARINELLSSLEGKGSLEEIIAEGQKKFATVPTGGASSAAAGAAGAAAGGDAAEEEKEEEAKEESDDDMGFGLFD</sequence>
<name>RLA4_YEAST</name>
<organism>
    <name type="scientific">Saccharomyces cerevisiae (strain ATCC 204508 / S288c)</name>
    <name type="common">Baker's yeast</name>
    <dbReference type="NCBI Taxonomy" id="559292"/>
    <lineage>
        <taxon>Eukaryota</taxon>
        <taxon>Fungi</taxon>
        <taxon>Dikarya</taxon>
        <taxon>Ascomycota</taxon>
        <taxon>Saccharomycotina</taxon>
        <taxon>Saccharomycetes</taxon>
        <taxon>Saccharomycetales</taxon>
        <taxon>Saccharomycetaceae</taxon>
        <taxon>Saccharomyces</taxon>
    </lineage>
</organism>
<protein>
    <recommendedName>
        <fullName evidence="8">Large ribosomal subunit protein P2B</fullName>
        <shortName>P2B</shortName>
    </recommendedName>
    <alternativeName>
        <fullName evidence="9">60S acidic ribosomal protein P2-beta</fullName>
    </alternativeName>
    <alternativeName>
        <fullName>L12eIA</fullName>
    </alternativeName>
    <alternativeName>
        <fullName>L45</fullName>
    </alternativeName>
    <alternativeName>
        <fullName>YL44C</fullName>
    </alternativeName>
    <alternativeName>
        <fullName>YP2beta</fullName>
    </alternativeName>
    <alternativeName>
        <fullName>YPA1</fullName>
    </alternativeName>
</protein>